<feature type="chain" id="PRO_0000071590" description="High frequency lysogenization protein HflD homolog">
    <location>
        <begin position="1"/>
        <end position="205"/>
    </location>
</feature>
<gene>
    <name evidence="1" type="primary">hflD</name>
    <name type="ordered locus">VC_1127</name>
</gene>
<dbReference type="EMBL" id="AE003852">
    <property type="protein sequence ID" value="AAF94286.1"/>
    <property type="molecule type" value="Genomic_DNA"/>
</dbReference>
<dbReference type="PIR" id="B82237">
    <property type="entry name" value="B82237"/>
</dbReference>
<dbReference type="RefSeq" id="NP_230772.1">
    <property type="nucleotide sequence ID" value="NC_002505.1"/>
</dbReference>
<dbReference type="RefSeq" id="WP_001262240.1">
    <property type="nucleotide sequence ID" value="NZ_LT906614.1"/>
</dbReference>
<dbReference type="SMR" id="Q9KSX9"/>
<dbReference type="STRING" id="243277.VC_1127"/>
<dbReference type="DNASU" id="2614397"/>
<dbReference type="EnsemblBacteria" id="AAF94286">
    <property type="protein sequence ID" value="AAF94286"/>
    <property type="gene ID" value="VC_1127"/>
</dbReference>
<dbReference type="GeneID" id="69720182"/>
<dbReference type="KEGG" id="vch:VC_1127"/>
<dbReference type="PATRIC" id="fig|243277.26.peg.1076"/>
<dbReference type="eggNOG" id="COG2915">
    <property type="taxonomic scope" value="Bacteria"/>
</dbReference>
<dbReference type="HOGENOM" id="CLU_098920_0_0_6"/>
<dbReference type="Proteomes" id="UP000000584">
    <property type="component" value="Chromosome 1"/>
</dbReference>
<dbReference type="GO" id="GO:0005737">
    <property type="term" value="C:cytoplasm"/>
    <property type="evidence" value="ECO:0007669"/>
    <property type="project" value="UniProtKB-SubCell"/>
</dbReference>
<dbReference type="GO" id="GO:0005886">
    <property type="term" value="C:plasma membrane"/>
    <property type="evidence" value="ECO:0007669"/>
    <property type="project" value="UniProtKB-SubCell"/>
</dbReference>
<dbReference type="FunFam" id="1.10.3890.10:FF:000001">
    <property type="entry name" value="High frequency lysogenization protein HflD homolog"/>
    <property type="match status" value="1"/>
</dbReference>
<dbReference type="Gene3D" id="1.10.3890.10">
    <property type="entry name" value="HflD-like"/>
    <property type="match status" value="1"/>
</dbReference>
<dbReference type="HAMAP" id="MF_00695">
    <property type="entry name" value="HflD_protein"/>
    <property type="match status" value="1"/>
</dbReference>
<dbReference type="InterPro" id="IPR007451">
    <property type="entry name" value="HflD"/>
</dbReference>
<dbReference type="InterPro" id="IPR035932">
    <property type="entry name" value="HflD-like_sf"/>
</dbReference>
<dbReference type="NCBIfam" id="NF001246">
    <property type="entry name" value="PRK00218.1-2"/>
    <property type="match status" value="1"/>
</dbReference>
<dbReference type="NCBIfam" id="NF001248">
    <property type="entry name" value="PRK00218.1-4"/>
    <property type="match status" value="1"/>
</dbReference>
<dbReference type="PANTHER" id="PTHR38100">
    <property type="entry name" value="HIGH FREQUENCY LYSOGENIZATION PROTEIN HFLD"/>
    <property type="match status" value="1"/>
</dbReference>
<dbReference type="PANTHER" id="PTHR38100:SF1">
    <property type="entry name" value="HIGH FREQUENCY LYSOGENIZATION PROTEIN HFLD"/>
    <property type="match status" value="1"/>
</dbReference>
<dbReference type="Pfam" id="PF04356">
    <property type="entry name" value="DUF489"/>
    <property type="match status" value="1"/>
</dbReference>
<dbReference type="SUPFAM" id="SSF101322">
    <property type="entry name" value="YcfC-like"/>
    <property type="match status" value="1"/>
</dbReference>
<sequence>MANAIYDRTIAFAGICQAVALVQQVAKNGYCDSDAFETSLKAITCTNPSNTLEVFGHESQLKLGLECLVKGIDSTPSGSEITRYLISLMALERKLSGRRDAMSQLGDRIQMIERQLDHFDLFDDQMISNLASIYLDVISPIGPRIQVTGTPAVLQQTANQHKVRALLLSGIRCAVLWRQVGGRRRHLIFGRKKMIEQAQILLARI</sequence>
<keyword id="KW-0997">Cell inner membrane</keyword>
<keyword id="KW-1003">Cell membrane</keyword>
<keyword id="KW-0963">Cytoplasm</keyword>
<keyword id="KW-0472">Membrane</keyword>
<keyword id="KW-1185">Reference proteome</keyword>
<evidence type="ECO:0000255" key="1">
    <source>
        <dbReference type="HAMAP-Rule" id="MF_00695"/>
    </source>
</evidence>
<reference key="1">
    <citation type="journal article" date="2000" name="Nature">
        <title>DNA sequence of both chromosomes of the cholera pathogen Vibrio cholerae.</title>
        <authorList>
            <person name="Heidelberg J.F."/>
            <person name="Eisen J.A."/>
            <person name="Nelson W.C."/>
            <person name="Clayton R.A."/>
            <person name="Gwinn M.L."/>
            <person name="Dodson R.J."/>
            <person name="Haft D.H."/>
            <person name="Hickey E.K."/>
            <person name="Peterson J.D."/>
            <person name="Umayam L.A."/>
            <person name="Gill S.R."/>
            <person name="Nelson K.E."/>
            <person name="Read T.D."/>
            <person name="Tettelin H."/>
            <person name="Richardson D.L."/>
            <person name="Ermolaeva M.D."/>
            <person name="Vamathevan J.J."/>
            <person name="Bass S."/>
            <person name="Qin H."/>
            <person name="Dragoi I."/>
            <person name="Sellers P."/>
            <person name="McDonald L.A."/>
            <person name="Utterback T.R."/>
            <person name="Fleischmann R.D."/>
            <person name="Nierman W.C."/>
            <person name="White O."/>
            <person name="Salzberg S.L."/>
            <person name="Smith H.O."/>
            <person name="Colwell R.R."/>
            <person name="Mekalanos J.J."/>
            <person name="Venter J.C."/>
            <person name="Fraser C.M."/>
        </authorList>
    </citation>
    <scope>NUCLEOTIDE SEQUENCE [LARGE SCALE GENOMIC DNA]</scope>
    <source>
        <strain>ATCC 39315 / El Tor Inaba N16961</strain>
    </source>
</reference>
<name>HFLD_VIBCH</name>
<protein>
    <recommendedName>
        <fullName evidence="1">High frequency lysogenization protein HflD homolog</fullName>
    </recommendedName>
</protein>
<comment type="subcellular location">
    <subcellularLocation>
        <location>Cytoplasm</location>
    </subcellularLocation>
    <subcellularLocation>
        <location evidence="1">Cell inner membrane</location>
        <topology evidence="1">Peripheral membrane protein</topology>
        <orientation evidence="1">Cytoplasmic side</orientation>
    </subcellularLocation>
</comment>
<comment type="similarity">
    <text evidence="1">Belongs to the HflD family.</text>
</comment>
<proteinExistence type="inferred from homology"/>
<organism>
    <name type="scientific">Vibrio cholerae serotype O1 (strain ATCC 39315 / El Tor Inaba N16961)</name>
    <dbReference type="NCBI Taxonomy" id="243277"/>
    <lineage>
        <taxon>Bacteria</taxon>
        <taxon>Pseudomonadati</taxon>
        <taxon>Pseudomonadota</taxon>
        <taxon>Gammaproteobacteria</taxon>
        <taxon>Vibrionales</taxon>
        <taxon>Vibrionaceae</taxon>
        <taxon>Vibrio</taxon>
    </lineage>
</organism>
<accession>Q9KSX9</accession>